<feature type="chain" id="PRO_0000316881" description="Fanconi anemia core complex-associated protein 20">
    <location>
        <begin position="1"/>
        <end position="192"/>
    </location>
</feature>
<feature type="zinc finger region" description="UBZ2-type" evidence="3">
    <location>
        <begin position="156"/>
        <end position="192"/>
    </location>
</feature>
<feature type="region of interest" description="Disordered" evidence="4">
    <location>
        <begin position="1"/>
        <end position="34"/>
    </location>
</feature>
<feature type="region of interest" description="Disordered" evidence="4">
    <location>
        <begin position="51"/>
        <end position="151"/>
    </location>
</feature>
<feature type="compositionally biased region" description="Basic residues" evidence="4">
    <location>
        <begin position="1"/>
        <end position="16"/>
    </location>
</feature>
<feature type="compositionally biased region" description="Basic and acidic residues" evidence="4">
    <location>
        <begin position="66"/>
        <end position="76"/>
    </location>
</feature>
<feature type="compositionally biased region" description="Low complexity" evidence="4">
    <location>
        <begin position="132"/>
        <end position="149"/>
    </location>
</feature>
<feature type="binding site" evidence="3">
    <location>
        <position position="159"/>
    </location>
    <ligand>
        <name>Zn(2+)</name>
        <dbReference type="ChEBI" id="CHEBI:29105"/>
    </ligand>
</feature>
<feature type="binding site" evidence="3">
    <location>
        <position position="162"/>
    </location>
    <ligand>
        <name>Zn(2+)</name>
        <dbReference type="ChEBI" id="CHEBI:29105"/>
    </ligand>
</feature>
<feature type="binding site" evidence="3">
    <location>
        <position position="178"/>
    </location>
    <ligand>
        <name>Zn(2+)</name>
        <dbReference type="ChEBI" id="CHEBI:29105"/>
    </ligand>
</feature>
<feature type="binding site" evidence="3">
    <location>
        <position position="182"/>
    </location>
    <ligand>
        <name>Zn(2+)</name>
        <dbReference type="ChEBI" id="CHEBI:29105"/>
    </ligand>
</feature>
<feature type="modified residue" description="Phosphoserine" evidence="2">
    <location>
        <position position="119"/>
    </location>
</feature>
<feature type="modified residue" description="Phosphoserine" evidence="2">
    <location>
        <position position="149"/>
    </location>
</feature>
<keyword id="KW-0158">Chromosome</keyword>
<keyword id="KW-0227">DNA damage</keyword>
<keyword id="KW-0234">DNA repair</keyword>
<keyword id="KW-0479">Metal-binding</keyword>
<keyword id="KW-0539">Nucleus</keyword>
<keyword id="KW-0597">Phosphoprotein</keyword>
<keyword id="KW-1185">Reference proteome</keyword>
<keyword id="KW-0862">Zinc</keyword>
<keyword id="KW-0863">Zinc-finger</keyword>
<name>FAP20_BOVIN</name>
<comment type="function">
    <text evidence="1">Component of the Fanconi anemia (FA) complex required to recruit the FA complex to DNA interstrand cross-links (ICLs) and promote ICLs repair. Following DNA damage recognizes and binds 'Lys-63'-linked ubiquitin generated by RNF8 at ICLs and recruits other components of the FA complex. Promotes translesion synthesis via interaction with REV1 (By similarity).</text>
</comment>
<comment type="subunit">
    <text evidence="1">Component of the Fanconi anemia (FA) complex. Interacts with FANCA; interaction is direct. Interacts with REV1 (By similarity).</text>
</comment>
<comment type="subcellular location">
    <subcellularLocation>
        <location evidence="2">Nucleus</location>
    </subcellularLocation>
    <subcellularLocation>
        <location evidence="2">Chromosome</location>
    </subcellularLocation>
    <text evidence="2">Following DNA damage, recruited to DNA interstrand cross-links (ICLs) sites by binding to ubiquitin generated by RNF8.</text>
</comment>
<comment type="domain">
    <text evidence="3">The UBZ2-type zinc finger binds both 'Lys-48'- and 'Lys-63'-linked polyubiquitin with preference for 'Lys-63'-linked polyubiquitin.</text>
</comment>
<comment type="sequence caution" evidence="5">
    <conflict type="erroneous initiation">
        <sequence resource="EMBL-CDS" id="AAI42526"/>
    </conflict>
</comment>
<sequence length="192" mass="20654">MEATRRSRLSLSRRRPPLGVRPRSNTAGSLPDGGECAKLWTELLRTASADLNVDGELPPLPAFPDQEPRRSPERPPPETFTVGTETFFWTPFPAPSPGRGGNSGGSDLVLSAVRGRTGSPQQYAAPELRGTPSAEEQPSEEQPSQRQSSVDGAMTLQSCPMCQVDFAPGLAQLDIDGHLAQCLADSTDDIEW</sequence>
<dbReference type="EMBL" id="BC142525">
    <property type="protein sequence ID" value="AAI42526.1"/>
    <property type="status" value="ALT_INIT"/>
    <property type="molecule type" value="mRNA"/>
</dbReference>
<dbReference type="RefSeq" id="NP_001160036.1">
    <property type="nucleotide sequence ID" value="NM_001166564.1"/>
</dbReference>
<dbReference type="SMR" id="A5PKK9"/>
<dbReference type="FunCoup" id="A5PKK9">
    <property type="interactions" value="542"/>
</dbReference>
<dbReference type="STRING" id="9913.ENSBTAP00000018787"/>
<dbReference type="PaxDb" id="9913-ENSBTAP00000018787"/>
<dbReference type="GeneID" id="508039"/>
<dbReference type="KEGG" id="bta:508039"/>
<dbReference type="CTD" id="199990"/>
<dbReference type="eggNOG" id="ENOG502SE5R">
    <property type="taxonomic scope" value="Eukaryota"/>
</dbReference>
<dbReference type="HOGENOM" id="CLU_122192_0_0_1"/>
<dbReference type="InParanoid" id="A5PKK9"/>
<dbReference type="OrthoDB" id="10063431at2759"/>
<dbReference type="TreeFam" id="TF336358"/>
<dbReference type="Proteomes" id="UP000009136">
    <property type="component" value="Unplaced"/>
</dbReference>
<dbReference type="GO" id="GO:0005694">
    <property type="term" value="C:chromosome"/>
    <property type="evidence" value="ECO:0000250"/>
    <property type="project" value="UniProtKB"/>
</dbReference>
<dbReference type="GO" id="GO:0043240">
    <property type="term" value="C:Fanconi anaemia nuclear complex"/>
    <property type="evidence" value="ECO:0000250"/>
    <property type="project" value="UniProtKB"/>
</dbReference>
<dbReference type="GO" id="GO:0070530">
    <property type="term" value="F:K63-linked polyubiquitin modification-dependent protein binding"/>
    <property type="evidence" value="ECO:0000250"/>
    <property type="project" value="UniProtKB"/>
</dbReference>
<dbReference type="GO" id="GO:0031593">
    <property type="term" value="F:polyubiquitin modification-dependent protein binding"/>
    <property type="evidence" value="ECO:0000250"/>
    <property type="project" value="UniProtKB"/>
</dbReference>
<dbReference type="GO" id="GO:0043130">
    <property type="term" value="F:ubiquitin binding"/>
    <property type="evidence" value="ECO:0007669"/>
    <property type="project" value="InterPro"/>
</dbReference>
<dbReference type="GO" id="GO:0140036">
    <property type="term" value="F:ubiquitin-modified protein reader activity"/>
    <property type="evidence" value="ECO:0000250"/>
    <property type="project" value="UniProtKB"/>
</dbReference>
<dbReference type="GO" id="GO:0008270">
    <property type="term" value="F:zinc ion binding"/>
    <property type="evidence" value="ECO:0007669"/>
    <property type="project" value="UniProtKB-KW"/>
</dbReference>
<dbReference type="GO" id="GO:0006974">
    <property type="term" value="P:DNA damage response"/>
    <property type="evidence" value="ECO:0000250"/>
    <property type="project" value="UniProtKB"/>
</dbReference>
<dbReference type="GO" id="GO:0036297">
    <property type="term" value="P:interstrand cross-link repair"/>
    <property type="evidence" value="ECO:0000250"/>
    <property type="project" value="UniProtKB"/>
</dbReference>
<dbReference type="GO" id="GO:0019985">
    <property type="term" value="P:translesion synthesis"/>
    <property type="evidence" value="ECO:0000250"/>
    <property type="project" value="UniProtKB"/>
</dbReference>
<dbReference type="InterPro" id="IPR052689">
    <property type="entry name" value="FA_core_complex_assoc"/>
</dbReference>
<dbReference type="InterPro" id="IPR031491">
    <property type="entry name" value="FANCA_interact"/>
</dbReference>
<dbReference type="InterPro" id="IPR031490">
    <property type="entry name" value="UBZ2_FAAP20"/>
</dbReference>
<dbReference type="PANTHER" id="PTHR37862">
    <property type="entry name" value="FANCONI ANEMIA CORE COMPLEX-ASSOCIATED PROTEIN 20"/>
    <property type="match status" value="1"/>
</dbReference>
<dbReference type="PANTHER" id="PTHR37862:SF1">
    <property type="entry name" value="FANCONI ANEMIA CORE COMPLEX-ASSOCIATED PROTEIN 20"/>
    <property type="match status" value="1"/>
</dbReference>
<dbReference type="Pfam" id="PF15751">
    <property type="entry name" value="FANCA_interact"/>
    <property type="match status" value="1"/>
</dbReference>
<dbReference type="Pfam" id="PF15750">
    <property type="entry name" value="UBZ_FAAP20"/>
    <property type="match status" value="1"/>
</dbReference>
<dbReference type="PROSITE" id="PS51906">
    <property type="entry name" value="ZF_UBZ2"/>
    <property type="match status" value="1"/>
</dbReference>
<organism>
    <name type="scientific">Bos taurus</name>
    <name type="common">Bovine</name>
    <dbReference type="NCBI Taxonomy" id="9913"/>
    <lineage>
        <taxon>Eukaryota</taxon>
        <taxon>Metazoa</taxon>
        <taxon>Chordata</taxon>
        <taxon>Craniata</taxon>
        <taxon>Vertebrata</taxon>
        <taxon>Euteleostomi</taxon>
        <taxon>Mammalia</taxon>
        <taxon>Eutheria</taxon>
        <taxon>Laurasiatheria</taxon>
        <taxon>Artiodactyla</taxon>
        <taxon>Ruminantia</taxon>
        <taxon>Pecora</taxon>
        <taxon>Bovidae</taxon>
        <taxon>Bovinae</taxon>
        <taxon>Bos</taxon>
    </lineage>
</organism>
<gene>
    <name evidence="2" type="primary">FAAP20</name>
</gene>
<reference key="1">
    <citation type="submission" date="2007-06" db="EMBL/GenBank/DDBJ databases">
        <authorList>
            <consortium name="NIH - Mammalian Gene Collection (MGC) project"/>
        </authorList>
    </citation>
    <scope>NUCLEOTIDE SEQUENCE [LARGE SCALE MRNA]</scope>
    <source>
        <strain>Hereford</strain>
        <tissue>Fetal brain</tissue>
    </source>
</reference>
<accession>A5PKK9</accession>
<protein>
    <recommendedName>
        <fullName evidence="2">Fanconi anemia core complex-associated protein 20</fullName>
    </recommendedName>
    <alternativeName>
        <fullName evidence="2">FANCA-associated protein of 20 kDa</fullName>
    </alternativeName>
    <alternativeName>
        <fullName evidence="2">Fanconi anemia-associated protein of 20 kDa</fullName>
    </alternativeName>
</protein>
<proteinExistence type="evidence at transcript level"/>
<evidence type="ECO:0000250" key="1"/>
<evidence type="ECO:0000250" key="2">
    <source>
        <dbReference type="UniProtKB" id="Q6NZ36"/>
    </source>
</evidence>
<evidence type="ECO:0000255" key="3">
    <source>
        <dbReference type="PROSITE-ProRule" id="PRU01254"/>
    </source>
</evidence>
<evidence type="ECO:0000256" key="4">
    <source>
        <dbReference type="SAM" id="MobiDB-lite"/>
    </source>
</evidence>
<evidence type="ECO:0000305" key="5"/>